<dbReference type="EMBL" id="CP000580">
    <property type="protein sequence ID" value="ABN99039.1"/>
    <property type="molecule type" value="Genomic_DNA"/>
</dbReference>
<dbReference type="SMR" id="A3Q1L2"/>
<dbReference type="KEGG" id="mjl:Mjls_3261"/>
<dbReference type="HOGENOM" id="CLU_078499_0_0_11"/>
<dbReference type="BioCyc" id="MSP164757:G1G8C-3287-MONOMER"/>
<dbReference type="GO" id="GO:0005737">
    <property type="term" value="C:cytoplasm"/>
    <property type="evidence" value="ECO:0007669"/>
    <property type="project" value="UniProtKB-SubCell"/>
</dbReference>
<dbReference type="GO" id="GO:0000917">
    <property type="term" value="P:division septum assembly"/>
    <property type="evidence" value="ECO:0007669"/>
    <property type="project" value="UniProtKB-KW"/>
</dbReference>
<dbReference type="GO" id="GO:0043093">
    <property type="term" value="P:FtsZ-dependent cytokinesis"/>
    <property type="evidence" value="ECO:0007669"/>
    <property type="project" value="UniProtKB-UniRule"/>
</dbReference>
<dbReference type="FunFam" id="3.30.110.150:FF:000001">
    <property type="entry name" value="Cell division protein SepF"/>
    <property type="match status" value="1"/>
</dbReference>
<dbReference type="Gene3D" id="3.30.110.150">
    <property type="entry name" value="SepF-like protein"/>
    <property type="match status" value="1"/>
</dbReference>
<dbReference type="HAMAP" id="MF_01197">
    <property type="entry name" value="SepF"/>
    <property type="match status" value="1"/>
</dbReference>
<dbReference type="InterPro" id="IPR023052">
    <property type="entry name" value="Cell_div_SepF"/>
</dbReference>
<dbReference type="InterPro" id="IPR007561">
    <property type="entry name" value="Cell_div_SepF/SepF-rel"/>
</dbReference>
<dbReference type="InterPro" id="IPR038594">
    <property type="entry name" value="SepF-like_sf"/>
</dbReference>
<dbReference type="PANTHER" id="PTHR35798">
    <property type="entry name" value="CELL DIVISION PROTEIN SEPF"/>
    <property type="match status" value="1"/>
</dbReference>
<dbReference type="PANTHER" id="PTHR35798:SF1">
    <property type="entry name" value="CELL DIVISION PROTEIN SEPF"/>
    <property type="match status" value="1"/>
</dbReference>
<dbReference type="Pfam" id="PF04472">
    <property type="entry name" value="SepF"/>
    <property type="match status" value="1"/>
</dbReference>
<protein>
    <recommendedName>
        <fullName evidence="1">Cell division protein SepF</fullName>
    </recommendedName>
</protein>
<reference key="1">
    <citation type="submission" date="2007-02" db="EMBL/GenBank/DDBJ databases">
        <title>Complete sequence of Mycobacterium sp. JLS.</title>
        <authorList>
            <consortium name="US DOE Joint Genome Institute"/>
            <person name="Copeland A."/>
            <person name="Lucas S."/>
            <person name="Lapidus A."/>
            <person name="Barry K."/>
            <person name="Detter J.C."/>
            <person name="Glavina del Rio T."/>
            <person name="Hammon N."/>
            <person name="Israni S."/>
            <person name="Dalin E."/>
            <person name="Tice H."/>
            <person name="Pitluck S."/>
            <person name="Chain P."/>
            <person name="Malfatti S."/>
            <person name="Shin M."/>
            <person name="Vergez L."/>
            <person name="Schmutz J."/>
            <person name="Larimer F."/>
            <person name="Land M."/>
            <person name="Hauser L."/>
            <person name="Kyrpides N."/>
            <person name="Mikhailova N."/>
            <person name="Miller C.D."/>
            <person name="Anderson A.J."/>
            <person name="Sims R.C."/>
            <person name="Richardson P."/>
        </authorList>
    </citation>
    <scope>NUCLEOTIDE SEQUENCE [LARGE SCALE GENOMIC DNA]</scope>
    <source>
        <strain>JLS</strain>
    </source>
</reference>
<comment type="function">
    <text evidence="1">Cell division protein that is part of the divisome complex and is recruited early to the Z-ring. Probably stimulates Z-ring formation, perhaps through the cross-linking of FtsZ protofilaments. Its function overlaps with FtsA.</text>
</comment>
<comment type="subunit">
    <text evidence="1">Homodimer. Interacts with FtsZ.</text>
</comment>
<comment type="subcellular location">
    <subcellularLocation>
        <location evidence="1">Cytoplasm</location>
    </subcellularLocation>
    <text evidence="1">Localizes to the division site, in a FtsZ-dependent manner.</text>
</comment>
<comment type="similarity">
    <text evidence="1">Belongs to the SepF family.</text>
</comment>
<sequence length="220" mass="25146">MSTLHKVKAYFGMAPMDDYDDEYYEDDDRAERGAARGYARRPREDRFEEEGYIDRAGREYDDRPAPREYDEPPIYRGGYDEPRFDPRLRGPREFERPAPRLGALRGSTRGALAMDPRRMAMLFEEGSPLAKITTLRPKDYSEARTIGEKFRDGTPVIMDLVSMDNADAKRLVDFAAGLAFALRGSFDKVATKVFLLSPADVDVTADERRRIAEAGFYAYQ</sequence>
<organism>
    <name type="scientific">Mycobacterium sp. (strain JLS)</name>
    <dbReference type="NCBI Taxonomy" id="164757"/>
    <lineage>
        <taxon>Bacteria</taxon>
        <taxon>Bacillati</taxon>
        <taxon>Actinomycetota</taxon>
        <taxon>Actinomycetes</taxon>
        <taxon>Mycobacteriales</taxon>
        <taxon>Mycobacteriaceae</taxon>
        <taxon>Mycobacterium</taxon>
    </lineage>
</organism>
<accession>A3Q1L2</accession>
<evidence type="ECO:0000255" key="1">
    <source>
        <dbReference type="HAMAP-Rule" id="MF_01197"/>
    </source>
</evidence>
<evidence type="ECO:0000256" key="2">
    <source>
        <dbReference type="SAM" id="MobiDB-lite"/>
    </source>
</evidence>
<gene>
    <name evidence="1" type="primary">sepF</name>
    <name type="ordered locus">Mjls_3261</name>
</gene>
<feature type="chain" id="PRO_0000334044" description="Cell division protein SepF">
    <location>
        <begin position="1"/>
        <end position="220"/>
    </location>
</feature>
<feature type="region of interest" description="Disordered" evidence="2">
    <location>
        <begin position="33"/>
        <end position="82"/>
    </location>
</feature>
<feature type="compositionally biased region" description="Basic and acidic residues" evidence="2">
    <location>
        <begin position="52"/>
        <end position="70"/>
    </location>
</feature>
<keyword id="KW-0131">Cell cycle</keyword>
<keyword id="KW-0132">Cell division</keyword>
<keyword id="KW-0963">Cytoplasm</keyword>
<keyword id="KW-0717">Septation</keyword>
<proteinExistence type="inferred from homology"/>
<name>SEPF_MYCSJ</name>